<feature type="chain" id="PRO_1000075057" description="4-diphosphocytidyl-2-C-methyl-D-erythritol kinase">
    <location>
        <begin position="1"/>
        <end position="282"/>
    </location>
</feature>
<feature type="active site" evidence="1">
    <location>
        <position position="9"/>
    </location>
</feature>
<feature type="active site" evidence="1">
    <location>
        <position position="140"/>
    </location>
</feature>
<feature type="binding site" evidence="1">
    <location>
        <begin position="98"/>
        <end position="108"/>
    </location>
    <ligand>
        <name>ATP</name>
        <dbReference type="ChEBI" id="CHEBI:30616"/>
    </ligand>
</feature>
<dbReference type="EC" id="2.7.1.148" evidence="1"/>
<dbReference type="EMBL" id="CP000886">
    <property type="protein sequence ID" value="ABX66856.1"/>
    <property type="molecule type" value="Genomic_DNA"/>
</dbReference>
<dbReference type="SMR" id="A9MW00"/>
<dbReference type="KEGG" id="spq:SPAB_01449"/>
<dbReference type="PATRIC" id="fig|1016998.12.peg.1368"/>
<dbReference type="HOGENOM" id="CLU_053057_3_0_6"/>
<dbReference type="UniPathway" id="UPA00056">
    <property type="reaction ID" value="UER00094"/>
</dbReference>
<dbReference type="Proteomes" id="UP000008556">
    <property type="component" value="Chromosome"/>
</dbReference>
<dbReference type="GO" id="GO:0050515">
    <property type="term" value="F:4-(cytidine 5'-diphospho)-2-C-methyl-D-erythritol kinase activity"/>
    <property type="evidence" value="ECO:0007669"/>
    <property type="project" value="UniProtKB-UniRule"/>
</dbReference>
<dbReference type="GO" id="GO:0005524">
    <property type="term" value="F:ATP binding"/>
    <property type="evidence" value="ECO:0007669"/>
    <property type="project" value="UniProtKB-UniRule"/>
</dbReference>
<dbReference type="GO" id="GO:0019288">
    <property type="term" value="P:isopentenyl diphosphate biosynthetic process, methylerythritol 4-phosphate pathway"/>
    <property type="evidence" value="ECO:0007669"/>
    <property type="project" value="UniProtKB-UniRule"/>
</dbReference>
<dbReference type="GO" id="GO:0016114">
    <property type="term" value="P:terpenoid biosynthetic process"/>
    <property type="evidence" value="ECO:0007669"/>
    <property type="project" value="InterPro"/>
</dbReference>
<dbReference type="FunFam" id="3.30.230.10:FF:000022">
    <property type="entry name" value="4-diphosphocytidyl-2-C-methyl-D-erythritol kinase"/>
    <property type="match status" value="1"/>
</dbReference>
<dbReference type="FunFam" id="3.30.70.890:FF:000004">
    <property type="entry name" value="4-diphosphocytidyl-2-C-methyl-D-erythritol kinase"/>
    <property type="match status" value="1"/>
</dbReference>
<dbReference type="Gene3D" id="3.30.230.10">
    <property type="match status" value="1"/>
</dbReference>
<dbReference type="Gene3D" id="3.30.70.890">
    <property type="entry name" value="GHMP kinase, C-terminal domain"/>
    <property type="match status" value="1"/>
</dbReference>
<dbReference type="HAMAP" id="MF_00061">
    <property type="entry name" value="IspE"/>
    <property type="match status" value="1"/>
</dbReference>
<dbReference type="InterPro" id="IPR013750">
    <property type="entry name" value="GHMP_kinase_C_dom"/>
</dbReference>
<dbReference type="InterPro" id="IPR036554">
    <property type="entry name" value="GHMP_kinase_C_sf"/>
</dbReference>
<dbReference type="InterPro" id="IPR006204">
    <property type="entry name" value="GHMP_kinase_N_dom"/>
</dbReference>
<dbReference type="InterPro" id="IPR004424">
    <property type="entry name" value="IspE"/>
</dbReference>
<dbReference type="InterPro" id="IPR020568">
    <property type="entry name" value="Ribosomal_Su5_D2-typ_SF"/>
</dbReference>
<dbReference type="InterPro" id="IPR014721">
    <property type="entry name" value="Ribsml_uS5_D2-typ_fold_subgr"/>
</dbReference>
<dbReference type="NCBIfam" id="TIGR00154">
    <property type="entry name" value="ispE"/>
    <property type="match status" value="1"/>
</dbReference>
<dbReference type="PANTHER" id="PTHR43527">
    <property type="entry name" value="4-DIPHOSPHOCYTIDYL-2-C-METHYL-D-ERYTHRITOL KINASE, CHLOROPLASTIC"/>
    <property type="match status" value="1"/>
</dbReference>
<dbReference type="PANTHER" id="PTHR43527:SF2">
    <property type="entry name" value="4-DIPHOSPHOCYTIDYL-2-C-METHYL-D-ERYTHRITOL KINASE, CHLOROPLASTIC"/>
    <property type="match status" value="1"/>
</dbReference>
<dbReference type="Pfam" id="PF08544">
    <property type="entry name" value="GHMP_kinases_C"/>
    <property type="match status" value="1"/>
</dbReference>
<dbReference type="Pfam" id="PF00288">
    <property type="entry name" value="GHMP_kinases_N"/>
    <property type="match status" value="1"/>
</dbReference>
<dbReference type="PIRSF" id="PIRSF010376">
    <property type="entry name" value="IspE"/>
    <property type="match status" value="1"/>
</dbReference>
<dbReference type="SUPFAM" id="SSF55060">
    <property type="entry name" value="GHMP Kinase, C-terminal domain"/>
    <property type="match status" value="1"/>
</dbReference>
<dbReference type="SUPFAM" id="SSF54211">
    <property type="entry name" value="Ribosomal protein S5 domain 2-like"/>
    <property type="match status" value="1"/>
</dbReference>
<accession>A9MW00</accession>
<gene>
    <name evidence="1" type="primary">ispE</name>
    <name type="ordered locus">SPAB_01449</name>
</gene>
<keyword id="KW-0067">ATP-binding</keyword>
<keyword id="KW-0414">Isoprene biosynthesis</keyword>
<keyword id="KW-0418">Kinase</keyword>
<keyword id="KW-0547">Nucleotide-binding</keyword>
<keyword id="KW-0808">Transferase</keyword>
<organism>
    <name type="scientific">Salmonella paratyphi B (strain ATCC BAA-1250 / SPB7)</name>
    <dbReference type="NCBI Taxonomy" id="1016998"/>
    <lineage>
        <taxon>Bacteria</taxon>
        <taxon>Pseudomonadati</taxon>
        <taxon>Pseudomonadota</taxon>
        <taxon>Gammaproteobacteria</taxon>
        <taxon>Enterobacterales</taxon>
        <taxon>Enterobacteriaceae</taxon>
        <taxon>Salmonella</taxon>
    </lineage>
</organism>
<comment type="function">
    <text evidence="1">Catalyzes the phosphorylation of the position 2 hydroxy group of 4-diphosphocytidyl-2C-methyl-D-erythritol.</text>
</comment>
<comment type="catalytic activity">
    <reaction evidence="1">
        <text>4-CDP-2-C-methyl-D-erythritol + ATP = 4-CDP-2-C-methyl-D-erythritol 2-phosphate + ADP + H(+)</text>
        <dbReference type="Rhea" id="RHEA:18437"/>
        <dbReference type="ChEBI" id="CHEBI:15378"/>
        <dbReference type="ChEBI" id="CHEBI:30616"/>
        <dbReference type="ChEBI" id="CHEBI:57823"/>
        <dbReference type="ChEBI" id="CHEBI:57919"/>
        <dbReference type="ChEBI" id="CHEBI:456216"/>
        <dbReference type="EC" id="2.7.1.148"/>
    </reaction>
</comment>
<comment type="pathway">
    <text evidence="1">Isoprenoid biosynthesis; isopentenyl diphosphate biosynthesis via DXP pathway; isopentenyl diphosphate from 1-deoxy-D-xylulose 5-phosphate: step 3/6.</text>
</comment>
<comment type="subunit">
    <text evidence="1">Homodimer.</text>
</comment>
<comment type="similarity">
    <text evidence="1">Belongs to the GHMP kinase family. IspE subfamily.</text>
</comment>
<protein>
    <recommendedName>
        <fullName evidence="1">4-diphosphocytidyl-2-C-methyl-D-erythritol kinase</fullName>
        <shortName evidence="1">CMK</shortName>
        <ecNumber evidence="1">2.7.1.148</ecNumber>
    </recommendedName>
    <alternativeName>
        <fullName evidence="1">4-(cytidine-5'-diphospho)-2-C-methyl-D-erythritol kinase</fullName>
    </alternativeName>
</protein>
<name>ISPE_SALPB</name>
<sequence>MTHWPSPAKLNLFLYITGQRADGYHTLQTLFQFLDYGDTLHIEPRHDGEIHLLTPVNGVENEDNLIVRAARLLMKVASESGRLPTGSGADISIEKRLPMGGGLGGGSSNAATVLVALNHLWQCGLSVDELAAIGLTLGADVPVFVRGHAAFAEGVGEILTPVNPPEKWYLVAHPGVSIPTPVIFKDPQLPRNTPKRSIDTLLKCEFSNDCEVIARKRFREVDAALSWLLEYAPSRLTGTGACVFAEFDTESCARQVLEQAPEWLNAFVAKGVNLSPLHRELL</sequence>
<evidence type="ECO:0000255" key="1">
    <source>
        <dbReference type="HAMAP-Rule" id="MF_00061"/>
    </source>
</evidence>
<proteinExistence type="inferred from homology"/>
<reference key="1">
    <citation type="submission" date="2007-11" db="EMBL/GenBank/DDBJ databases">
        <authorList>
            <consortium name="The Salmonella enterica serovar Paratyphi B Genome Sequencing Project"/>
            <person name="McClelland M."/>
            <person name="Sanderson E.K."/>
            <person name="Porwollik S."/>
            <person name="Spieth J."/>
            <person name="Clifton W.S."/>
            <person name="Fulton R."/>
            <person name="Cordes M."/>
            <person name="Wollam A."/>
            <person name="Shah N."/>
            <person name="Pepin K."/>
            <person name="Bhonagiri V."/>
            <person name="Nash W."/>
            <person name="Johnson M."/>
            <person name="Thiruvilangam P."/>
            <person name="Wilson R."/>
        </authorList>
    </citation>
    <scope>NUCLEOTIDE SEQUENCE [LARGE SCALE GENOMIC DNA]</scope>
    <source>
        <strain>ATCC BAA-1250 / SPB7</strain>
    </source>
</reference>